<sequence>MTSSSGSLKLEIHTDDKTPGKWSVPLGDDVFRRFLSGGGGSEKAVFGEGSLFSPFLFGKYFDPSDAFPLWEFEAEVLLASLRSLGQCRVDWSQTDQAYVLKSDIPVVGKNNVQVYVDINGRVMEISGQWNSNKKAATNSDWRSGRWWEHGYVRRLELPSDADAKYSEAFLSNNDDYSFLEIRIPKINSKNKF</sequence>
<protein>
    <recommendedName>
        <fullName>21.7 kDa class VI heat shock protein</fullName>
    </recommendedName>
    <alternativeName>
        <fullName>21.7 kDa heat shock protein</fullName>
        <shortName>AtHsp21.7</shortName>
    </alternativeName>
</protein>
<dbReference type="EMBL" id="AB016879">
    <property type="protein sequence ID" value="BAB09345.1"/>
    <property type="molecule type" value="Genomic_DNA"/>
</dbReference>
<dbReference type="EMBL" id="CP002688">
    <property type="protein sequence ID" value="AED96524.1"/>
    <property type="molecule type" value="Genomic_DNA"/>
</dbReference>
<dbReference type="EMBL" id="BT029496">
    <property type="protein sequence ID" value="ABL66753.1"/>
    <property type="molecule type" value="mRNA"/>
</dbReference>
<dbReference type="RefSeq" id="NP_568810.1">
    <property type="nucleotide sequence ID" value="NM_124847.2"/>
</dbReference>
<dbReference type="SMR" id="Q9FIT9"/>
<dbReference type="FunCoup" id="Q9FIT9">
    <property type="interactions" value="55"/>
</dbReference>
<dbReference type="STRING" id="3702.Q9FIT9"/>
<dbReference type="PaxDb" id="3702-AT5G54660.1"/>
<dbReference type="ProteomicsDB" id="230141"/>
<dbReference type="EnsemblPlants" id="AT5G54660.1">
    <property type="protein sequence ID" value="AT5G54660.1"/>
    <property type="gene ID" value="AT5G54660"/>
</dbReference>
<dbReference type="GeneID" id="835555"/>
<dbReference type="Gramene" id="AT5G54660.1">
    <property type="protein sequence ID" value="AT5G54660.1"/>
    <property type="gene ID" value="AT5G54660"/>
</dbReference>
<dbReference type="KEGG" id="ath:AT5G54660"/>
<dbReference type="Araport" id="AT5G54660"/>
<dbReference type="TAIR" id="AT5G54660"/>
<dbReference type="eggNOG" id="ENOG502RXVI">
    <property type="taxonomic scope" value="Eukaryota"/>
</dbReference>
<dbReference type="HOGENOM" id="CLU_088060_0_0_1"/>
<dbReference type="InParanoid" id="Q9FIT9"/>
<dbReference type="OMA" id="HNDIYLE"/>
<dbReference type="PhylomeDB" id="Q9FIT9"/>
<dbReference type="PRO" id="PR:Q9FIT9"/>
<dbReference type="Proteomes" id="UP000006548">
    <property type="component" value="Chromosome 5"/>
</dbReference>
<dbReference type="ExpressionAtlas" id="Q9FIT9">
    <property type="expression patterns" value="baseline and differential"/>
</dbReference>
<dbReference type="GO" id="GO:0005737">
    <property type="term" value="C:cytoplasm"/>
    <property type="evidence" value="ECO:0007669"/>
    <property type="project" value="UniProtKB-SubCell"/>
</dbReference>
<dbReference type="CDD" id="cd06472">
    <property type="entry name" value="ACD_ScHsp26_like"/>
    <property type="match status" value="1"/>
</dbReference>
<dbReference type="Gene3D" id="2.60.40.790">
    <property type="match status" value="1"/>
</dbReference>
<dbReference type="InterPro" id="IPR002068">
    <property type="entry name" value="A-crystallin/Hsp20_dom"/>
</dbReference>
<dbReference type="InterPro" id="IPR008978">
    <property type="entry name" value="HSP20-like_chaperone"/>
</dbReference>
<dbReference type="PANTHER" id="PTHR47838">
    <property type="entry name" value="21.7 KDA CLASS VI HEAT SHOCK PROTEIN"/>
    <property type="match status" value="1"/>
</dbReference>
<dbReference type="PANTHER" id="PTHR47838:SF1">
    <property type="entry name" value="21.7 KDA CLASS VI HEAT SHOCK PROTEIN"/>
    <property type="match status" value="1"/>
</dbReference>
<dbReference type="Pfam" id="PF00011">
    <property type="entry name" value="HSP20"/>
    <property type="match status" value="1"/>
</dbReference>
<dbReference type="SUPFAM" id="SSF49764">
    <property type="entry name" value="HSP20-like chaperones"/>
    <property type="match status" value="1"/>
</dbReference>
<dbReference type="PROSITE" id="PS01031">
    <property type="entry name" value="SHSP"/>
    <property type="match status" value="1"/>
</dbReference>
<feature type="chain" id="PRO_0000387490" description="21.7 kDa class VI heat shock protein">
    <location>
        <begin position="1"/>
        <end position="192"/>
    </location>
</feature>
<feature type="domain" description="sHSP" evidence="1">
    <location>
        <begin position="80"/>
        <end position="192"/>
    </location>
</feature>
<keyword id="KW-0963">Cytoplasm</keyword>
<keyword id="KW-1185">Reference proteome</keyword>
<keyword id="KW-0346">Stress response</keyword>
<organism>
    <name type="scientific">Arabidopsis thaliana</name>
    <name type="common">Mouse-ear cress</name>
    <dbReference type="NCBI Taxonomy" id="3702"/>
    <lineage>
        <taxon>Eukaryota</taxon>
        <taxon>Viridiplantae</taxon>
        <taxon>Streptophyta</taxon>
        <taxon>Embryophyta</taxon>
        <taxon>Tracheophyta</taxon>
        <taxon>Spermatophyta</taxon>
        <taxon>Magnoliopsida</taxon>
        <taxon>eudicotyledons</taxon>
        <taxon>Gunneridae</taxon>
        <taxon>Pentapetalae</taxon>
        <taxon>rosids</taxon>
        <taxon>malvids</taxon>
        <taxon>Brassicales</taxon>
        <taxon>Brassicaceae</taxon>
        <taxon>Camelineae</taxon>
        <taxon>Arabidopsis</taxon>
    </lineage>
</organism>
<comment type="subunit">
    <text>May form oligomeric structures.</text>
</comment>
<comment type="subcellular location">
    <subcellularLocation>
        <location evidence="2">Cytoplasm</location>
    </subcellularLocation>
</comment>
<comment type="similarity">
    <text evidence="1">Belongs to the small heat shock protein (HSP20) family.</text>
</comment>
<gene>
    <name type="primary">HSP21.7</name>
    <name type="ordered locus">At5g54660</name>
    <name type="ORF">MRB17.16</name>
</gene>
<name>HS217_ARATH</name>
<proteinExistence type="evidence at transcript level"/>
<evidence type="ECO:0000255" key="1">
    <source>
        <dbReference type="PROSITE-ProRule" id="PRU00285"/>
    </source>
</evidence>
<evidence type="ECO:0000305" key="2"/>
<accession>Q9FIT9</accession>
<reference key="1">
    <citation type="journal article" date="1998" name="DNA Res.">
        <title>Structural analysis of Arabidopsis thaliana chromosome 5. VII. Sequence features of the regions of 1,013,767 bp covered by sixteen physically assigned P1 and TAC clones.</title>
        <authorList>
            <person name="Nakamura Y."/>
            <person name="Sato S."/>
            <person name="Asamizu E."/>
            <person name="Kaneko T."/>
            <person name="Kotani H."/>
            <person name="Miyajima N."/>
            <person name="Tabata S."/>
        </authorList>
    </citation>
    <scope>NUCLEOTIDE SEQUENCE [LARGE SCALE GENOMIC DNA]</scope>
    <source>
        <strain>cv. Columbia</strain>
    </source>
</reference>
<reference key="2">
    <citation type="journal article" date="2017" name="Plant J.">
        <title>Araport11: a complete reannotation of the Arabidopsis thaliana reference genome.</title>
        <authorList>
            <person name="Cheng C.Y."/>
            <person name="Krishnakumar V."/>
            <person name="Chan A.P."/>
            <person name="Thibaud-Nissen F."/>
            <person name="Schobel S."/>
            <person name="Town C.D."/>
        </authorList>
    </citation>
    <scope>GENOME REANNOTATION</scope>
    <source>
        <strain>cv. Columbia</strain>
    </source>
</reference>
<reference key="3">
    <citation type="submission" date="2006-12" db="EMBL/GenBank/DDBJ databases">
        <title>Arabidopsis ORF clones.</title>
        <authorList>
            <person name="Bautista V.R."/>
            <person name="Kim C.J."/>
            <person name="Chen H."/>
            <person name="Quinitio C."/>
            <person name="Ecker J.R."/>
        </authorList>
    </citation>
    <scope>NUCLEOTIDE SEQUENCE [LARGE SCALE MRNA]</scope>
    <source>
        <strain>cv. Columbia</strain>
    </source>
</reference>